<protein>
    <recommendedName>
        <fullName>Autophagy-related protein 17</fullName>
    </recommendedName>
</protein>
<feature type="chain" id="PRO_0000124556" description="Autophagy-related protein 17">
    <location>
        <begin position="1"/>
        <end position="551"/>
    </location>
</feature>
<feature type="region of interest" description="Disordered" evidence="2">
    <location>
        <begin position="1"/>
        <end position="25"/>
    </location>
</feature>
<feature type="region of interest" description="Disordered" evidence="2">
    <location>
        <begin position="204"/>
        <end position="225"/>
    </location>
</feature>
<feature type="region of interest" description="Disordered" evidence="2">
    <location>
        <begin position="502"/>
        <end position="524"/>
    </location>
</feature>
<feature type="compositionally biased region" description="Low complexity" evidence="2">
    <location>
        <begin position="205"/>
        <end position="225"/>
    </location>
</feature>
<organism>
    <name type="scientific">Aspergillus fumigatus (strain ATCC MYA-4609 / CBS 101355 / FGSC A1100 / Af293)</name>
    <name type="common">Neosartorya fumigata</name>
    <dbReference type="NCBI Taxonomy" id="330879"/>
    <lineage>
        <taxon>Eukaryota</taxon>
        <taxon>Fungi</taxon>
        <taxon>Dikarya</taxon>
        <taxon>Ascomycota</taxon>
        <taxon>Pezizomycotina</taxon>
        <taxon>Eurotiomycetes</taxon>
        <taxon>Eurotiomycetidae</taxon>
        <taxon>Eurotiales</taxon>
        <taxon>Aspergillaceae</taxon>
        <taxon>Aspergillus</taxon>
        <taxon>Aspergillus subgen. Fumigati</taxon>
    </lineage>
</organism>
<keyword id="KW-0072">Autophagy</keyword>
<keyword id="KW-0963">Cytoplasm</keyword>
<keyword id="KW-0472">Membrane</keyword>
<keyword id="KW-1185">Reference proteome</keyword>
<name>ATG17_ASPFU</name>
<sequence>MSSSESSSVSGGGRPDAGRLPGEEQAMPRLDTLISHLVAAKRSLSSINHVWRANEIVTAARAALEECVVVSARTAFLRRGLNNQLRLLYSVRTEVEEISLRGRSEFAAVLKDLDDADTRLRRTLELLRETIVHPAFRPEGEDPKSLHDFVDERGVEELHAALKSSIDRTTAAQAQLDSSNHAFDDELLSIKEALGTYRTAAKLASSRSSSSASSSSTSNSSLPSISTMPSMLHSLEMHAQEMANLLESLVRHFDLCVTAVKHTEGGGAAAKSITGDMPVGVPVSGRMGSNIEEEINNNLNAPLDPLSNSEYQEMVNVLFKDAAEAEDVVMEIQDRIGEMESVLENVLAQRDALRSIYNATTDIYQHLSSLGSTRLPGYIAQAHNFTQVWHEENDRISGGLADLSDLNSLYNGFLDAYDGLIVEVARRKHVRQRVEKVLRDTRHKLDQLYEEDVTARETFRVEKGDYLPSDIWPEIGREPMRIEFRRISGAKVQAVNLQSPNEQEAITDEQKTANRLAPVESKDGDEIIPDLPRELVEQAFARLKARAKDAT</sequence>
<dbReference type="EMBL" id="AAHF01000001">
    <property type="protein sequence ID" value="EAL93705.1"/>
    <property type="molecule type" value="Genomic_DNA"/>
</dbReference>
<dbReference type="RefSeq" id="XP_755743.1">
    <property type="nucleotide sequence ID" value="XM_750650.1"/>
</dbReference>
<dbReference type="SMR" id="Q4X0B0"/>
<dbReference type="STRING" id="330879.Q4X0B0"/>
<dbReference type="EnsemblFungi" id="EAL93705">
    <property type="protein sequence ID" value="EAL93705"/>
    <property type="gene ID" value="AFUA_2G14100"/>
</dbReference>
<dbReference type="GeneID" id="3513148"/>
<dbReference type="KEGG" id="afm:AFUA_2G14100"/>
<dbReference type="VEuPathDB" id="FungiDB:Afu2g14100"/>
<dbReference type="eggNOG" id="ENOG502RYHP">
    <property type="taxonomic scope" value="Eukaryota"/>
</dbReference>
<dbReference type="HOGENOM" id="CLU_028356_0_0_1"/>
<dbReference type="InParanoid" id="Q4X0B0"/>
<dbReference type="OMA" id="THVWRAN"/>
<dbReference type="OrthoDB" id="1937984at2759"/>
<dbReference type="Proteomes" id="UP000002530">
    <property type="component" value="Chromosome 2"/>
</dbReference>
<dbReference type="GO" id="GO:1990316">
    <property type="term" value="C:Atg1/ULK1 kinase complex"/>
    <property type="evidence" value="ECO:0000318"/>
    <property type="project" value="GO_Central"/>
</dbReference>
<dbReference type="GO" id="GO:0000407">
    <property type="term" value="C:phagophore assembly site"/>
    <property type="evidence" value="ECO:0000318"/>
    <property type="project" value="GO_Central"/>
</dbReference>
<dbReference type="GO" id="GO:0034045">
    <property type="term" value="C:phagophore assembly site membrane"/>
    <property type="evidence" value="ECO:0007669"/>
    <property type="project" value="UniProtKB-SubCell"/>
</dbReference>
<dbReference type="GO" id="GO:0060090">
    <property type="term" value="F:molecular adaptor activity"/>
    <property type="evidence" value="ECO:0000318"/>
    <property type="project" value="GO_Central"/>
</dbReference>
<dbReference type="GO" id="GO:0030295">
    <property type="term" value="F:protein kinase activator activity"/>
    <property type="evidence" value="ECO:0000318"/>
    <property type="project" value="GO_Central"/>
</dbReference>
<dbReference type="GO" id="GO:0000045">
    <property type="term" value="P:autophagosome assembly"/>
    <property type="evidence" value="ECO:0000318"/>
    <property type="project" value="GO_Central"/>
</dbReference>
<dbReference type="GO" id="GO:0000423">
    <property type="term" value="P:mitophagy"/>
    <property type="evidence" value="ECO:0000318"/>
    <property type="project" value="GO_Central"/>
</dbReference>
<dbReference type="GO" id="GO:0000425">
    <property type="term" value="P:pexophagy"/>
    <property type="evidence" value="ECO:0000318"/>
    <property type="project" value="GO_Central"/>
</dbReference>
<dbReference type="GO" id="GO:0034727">
    <property type="term" value="P:piecemeal microautophagy of the nucleus"/>
    <property type="evidence" value="ECO:0000318"/>
    <property type="project" value="GO_Central"/>
</dbReference>
<dbReference type="InterPro" id="IPR007240">
    <property type="entry name" value="Atg17"/>
</dbReference>
<dbReference type="InterPro" id="IPR045326">
    <property type="entry name" value="ATG17-like_dom"/>
</dbReference>
<dbReference type="PANTHER" id="PTHR28005">
    <property type="entry name" value="AUTOPHAGY-RELATED PROTEIN 17"/>
    <property type="match status" value="1"/>
</dbReference>
<dbReference type="PANTHER" id="PTHR28005:SF1">
    <property type="entry name" value="AUTOPHAGY-RELATED PROTEIN 17"/>
    <property type="match status" value="1"/>
</dbReference>
<dbReference type="Pfam" id="PF04108">
    <property type="entry name" value="ATG17_like"/>
    <property type="match status" value="1"/>
</dbReference>
<gene>
    <name type="primary">atg17</name>
    <name type="ORF">AFUA_2G14100</name>
</gene>
<proteinExistence type="inferred from homology"/>
<comment type="function">
    <text evidence="1">Autophagy-specific protein that functions in response to autophagy-inducing signals as a scaffold to recruit other ATG proteins to organize pre-autophagosomal structure (PAS) formation. Modulates the timing and magnitude of the autophagy response, such as the size of the sequestering vesicles. Plays particularly a role in pexophagy and nucleophagy (By similarity).</text>
</comment>
<comment type="subcellular location">
    <subcellularLocation>
        <location evidence="1">Cytoplasm</location>
    </subcellularLocation>
    <subcellularLocation>
        <location evidence="1">Preautophagosomal structure membrane</location>
        <topology evidence="1">Peripheral membrane protein</topology>
    </subcellularLocation>
</comment>
<comment type="similarity">
    <text evidence="3">Belongs to the ATG17 family.</text>
</comment>
<evidence type="ECO:0000250" key="1"/>
<evidence type="ECO:0000256" key="2">
    <source>
        <dbReference type="SAM" id="MobiDB-lite"/>
    </source>
</evidence>
<evidence type="ECO:0000305" key="3"/>
<reference key="1">
    <citation type="journal article" date="2005" name="Nature">
        <title>Genomic sequence of the pathogenic and allergenic filamentous fungus Aspergillus fumigatus.</title>
        <authorList>
            <person name="Nierman W.C."/>
            <person name="Pain A."/>
            <person name="Anderson M.J."/>
            <person name="Wortman J.R."/>
            <person name="Kim H.S."/>
            <person name="Arroyo J."/>
            <person name="Berriman M."/>
            <person name="Abe K."/>
            <person name="Archer D.B."/>
            <person name="Bermejo C."/>
            <person name="Bennett J.W."/>
            <person name="Bowyer P."/>
            <person name="Chen D."/>
            <person name="Collins M."/>
            <person name="Coulsen R."/>
            <person name="Davies R."/>
            <person name="Dyer P.S."/>
            <person name="Farman M.L."/>
            <person name="Fedorova N."/>
            <person name="Fedorova N.D."/>
            <person name="Feldblyum T.V."/>
            <person name="Fischer R."/>
            <person name="Fosker N."/>
            <person name="Fraser A."/>
            <person name="Garcia J.L."/>
            <person name="Garcia M.J."/>
            <person name="Goble A."/>
            <person name="Goldman G.H."/>
            <person name="Gomi K."/>
            <person name="Griffith-Jones S."/>
            <person name="Gwilliam R."/>
            <person name="Haas B.J."/>
            <person name="Haas H."/>
            <person name="Harris D.E."/>
            <person name="Horiuchi H."/>
            <person name="Huang J."/>
            <person name="Humphray S."/>
            <person name="Jimenez J."/>
            <person name="Keller N."/>
            <person name="Khouri H."/>
            <person name="Kitamoto K."/>
            <person name="Kobayashi T."/>
            <person name="Konzack S."/>
            <person name="Kulkarni R."/>
            <person name="Kumagai T."/>
            <person name="Lafton A."/>
            <person name="Latge J.-P."/>
            <person name="Li W."/>
            <person name="Lord A."/>
            <person name="Lu C."/>
            <person name="Majoros W.H."/>
            <person name="May G.S."/>
            <person name="Miller B.L."/>
            <person name="Mohamoud Y."/>
            <person name="Molina M."/>
            <person name="Monod M."/>
            <person name="Mouyna I."/>
            <person name="Mulligan S."/>
            <person name="Murphy L.D."/>
            <person name="O'Neil S."/>
            <person name="Paulsen I."/>
            <person name="Penalva M.A."/>
            <person name="Pertea M."/>
            <person name="Price C."/>
            <person name="Pritchard B.L."/>
            <person name="Quail M.A."/>
            <person name="Rabbinowitsch E."/>
            <person name="Rawlins N."/>
            <person name="Rajandream M.A."/>
            <person name="Reichard U."/>
            <person name="Renauld H."/>
            <person name="Robson G.D."/>
            <person name="Rodriguez de Cordoba S."/>
            <person name="Rodriguez-Pena J.M."/>
            <person name="Ronning C.M."/>
            <person name="Rutter S."/>
            <person name="Salzberg S.L."/>
            <person name="Sanchez M."/>
            <person name="Sanchez-Ferrero J.C."/>
            <person name="Saunders D."/>
            <person name="Seeger K."/>
            <person name="Squares R."/>
            <person name="Squares S."/>
            <person name="Takeuchi M."/>
            <person name="Tekaia F."/>
            <person name="Turner G."/>
            <person name="Vazquez de Aldana C.R."/>
            <person name="Weidman J."/>
            <person name="White O."/>
            <person name="Woodward J.R."/>
            <person name="Yu J.-H."/>
            <person name="Fraser C.M."/>
            <person name="Galagan J.E."/>
            <person name="Asai K."/>
            <person name="Machida M."/>
            <person name="Hall N."/>
            <person name="Barrell B.G."/>
            <person name="Denning D.W."/>
        </authorList>
    </citation>
    <scope>NUCLEOTIDE SEQUENCE [LARGE SCALE GENOMIC DNA]</scope>
    <source>
        <strain>ATCC MYA-4609 / CBS 101355 / FGSC A1100 / Af293</strain>
    </source>
</reference>
<accession>Q4X0B0</accession>